<gene>
    <name type="primary">nifH</name>
</gene>
<accession>Q00240</accession>
<dbReference type="EC" id="1.18.6.1"/>
<dbReference type="EMBL" id="D00666">
    <property type="protein sequence ID" value="BAA00568.1"/>
    <property type="molecule type" value="Genomic_DNA"/>
</dbReference>
<dbReference type="EMBL" id="L15552">
    <property type="protein sequence ID" value="AAA19031.1"/>
    <property type="molecule type" value="Unassigned_DNA"/>
</dbReference>
<dbReference type="PIR" id="JQ2155">
    <property type="entry name" value="JQ2155"/>
</dbReference>
<dbReference type="SMR" id="Q00240"/>
<dbReference type="GO" id="GO:0051539">
    <property type="term" value="F:4 iron, 4 sulfur cluster binding"/>
    <property type="evidence" value="ECO:0007669"/>
    <property type="project" value="UniProtKB-KW"/>
</dbReference>
<dbReference type="GO" id="GO:0005524">
    <property type="term" value="F:ATP binding"/>
    <property type="evidence" value="ECO:0007669"/>
    <property type="project" value="UniProtKB-UniRule"/>
</dbReference>
<dbReference type="GO" id="GO:0046872">
    <property type="term" value="F:metal ion binding"/>
    <property type="evidence" value="ECO:0007669"/>
    <property type="project" value="UniProtKB-KW"/>
</dbReference>
<dbReference type="GO" id="GO:0016163">
    <property type="term" value="F:nitrogenase activity"/>
    <property type="evidence" value="ECO:0007669"/>
    <property type="project" value="UniProtKB-UniRule"/>
</dbReference>
<dbReference type="GO" id="GO:0009399">
    <property type="term" value="P:nitrogen fixation"/>
    <property type="evidence" value="ECO:0007669"/>
    <property type="project" value="UniProtKB-UniRule"/>
</dbReference>
<dbReference type="CDD" id="cd02040">
    <property type="entry name" value="NifH"/>
    <property type="match status" value="1"/>
</dbReference>
<dbReference type="FunFam" id="3.40.50.300:FF:001379">
    <property type="entry name" value="Nitrogenase iron protein 1"/>
    <property type="match status" value="1"/>
</dbReference>
<dbReference type="Gene3D" id="3.40.50.300">
    <property type="entry name" value="P-loop containing nucleotide triphosphate hydrolases"/>
    <property type="match status" value="1"/>
</dbReference>
<dbReference type="HAMAP" id="MF_00533">
    <property type="entry name" value="NifH"/>
    <property type="match status" value="1"/>
</dbReference>
<dbReference type="InterPro" id="IPR030655">
    <property type="entry name" value="NifH/chlL_CS"/>
</dbReference>
<dbReference type="InterPro" id="IPR000392">
    <property type="entry name" value="NifH/frxC"/>
</dbReference>
<dbReference type="InterPro" id="IPR005977">
    <property type="entry name" value="Nitrogenase_Fe_NifH"/>
</dbReference>
<dbReference type="InterPro" id="IPR027417">
    <property type="entry name" value="P-loop_NTPase"/>
</dbReference>
<dbReference type="NCBIfam" id="TIGR01287">
    <property type="entry name" value="nifH"/>
    <property type="match status" value="1"/>
</dbReference>
<dbReference type="PANTHER" id="PTHR42864">
    <property type="entry name" value="LIGHT-INDEPENDENT PROTOCHLOROPHYLLIDE REDUCTASE IRON-SULFUR ATP-BINDING PROTEIN"/>
    <property type="match status" value="1"/>
</dbReference>
<dbReference type="PANTHER" id="PTHR42864:SF2">
    <property type="entry name" value="LIGHT-INDEPENDENT PROTOCHLOROPHYLLIDE REDUCTASE IRON-SULFUR ATP-BINDING PROTEIN"/>
    <property type="match status" value="1"/>
</dbReference>
<dbReference type="Pfam" id="PF00142">
    <property type="entry name" value="Fer4_NifH"/>
    <property type="match status" value="1"/>
</dbReference>
<dbReference type="PIRSF" id="PIRSF000363">
    <property type="entry name" value="Nitrogenase_iron"/>
    <property type="match status" value="1"/>
</dbReference>
<dbReference type="PRINTS" id="PR00091">
    <property type="entry name" value="NITROGNASEII"/>
</dbReference>
<dbReference type="SUPFAM" id="SSF52540">
    <property type="entry name" value="P-loop containing nucleoside triphosphate hydrolases"/>
    <property type="match status" value="1"/>
</dbReference>
<dbReference type="PROSITE" id="PS00746">
    <property type="entry name" value="NIFH_FRXC_1"/>
    <property type="match status" value="1"/>
</dbReference>
<dbReference type="PROSITE" id="PS00692">
    <property type="entry name" value="NIFH_FRXC_2"/>
    <property type="match status" value="1"/>
</dbReference>
<dbReference type="PROSITE" id="PS51026">
    <property type="entry name" value="NIFH_FRXC_3"/>
    <property type="match status" value="1"/>
</dbReference>
<comment type="function">
    <text evidence="1">The key enzymatic reactions in nitrogen fixation are catalyzed by the nitrogenase complex, which has 2 components: the iron protein and the molybdenum-iron protein.</text>
</comment>
<comment type="catalytic activity">
    <reaction>
        <text>N2 + 8 reduced [2Fe-2S]-[ferredoxin] + 16 ATP + 16 H2O = H2 + 8 oxidized [2Fe-2S]-[ferredoxin] + 2 NH4(+) + 16 ADP + 16 phosphate + 6 H(+)</text>
        <dbReference type="Rhea" id="RHEA:21448"/>
        <dbReference type="Rhea" id="RHEA-COMP:10000"/>
        <dbReference type="Rhea" id="RHEA-COMP:10001"/>
        <dbReference type="ChEBI" id="CHEBI:15377"/>
        <dbReference type="ChEBI" id="CHEBI:15378"/>
        <dbReference type="ChEBI" id="CHEBI:17997"/>
        <dbReference type="ChEBI" id="CHEBI:18276"/>
        <dbReference type="ChEBI" id="CHEBI:28938"/>
        <dbReference type="ChEBI" id="CHEBI:30616"/>
        <dbReference type="ChEBI" id="CHEBI:33737"/>
        <dbReference type="ChEBI" id="CHEBI:33738"/>
        <dbReference type="ChEBI" id="CHEBI:43474"/>
        <dbReference type="ChEBI" id="CHEBI:456216"/>
        <dbReference type="EC" id="1.18.6.1"/>
    </reaction>
</comment>
<comment type="cofactor">
    <cofactor evidence="1">
        <name>[4Fe-4S] cluster</name>
        <dbReference type="ChEBI" id="CHEBI:49883"/>
    </cofactor>
    <text evidence="1">Binds 1 [4Fe-4S] cluster per dimer.</text>
</comment>
<comment type="subunit">
    <text evidence="1">Homodimer.</text>
</comment>
<comment type="PTM">
    <text evidence="1">The reversible ADP-ribosylation of Arg-104 inactivates the nitrogenase reductase and regulates nitrogenase activity.</text>
</comment>
<comment type="similarity">
    <text evidence="3">Belongs to the NifH/BchL/ChlL family.</text>
</comment>
<protein>
    <recommendedName>
        <fullName>Nitrogenase iron protein</fullName>
        <ecNumber>1.18.6.1</ecNumber>
    </recommendedName>
    <alternativeName>
        <fullName>Nitrogenase Fe protein</fullName>
    </alternativeName>
    <alternativeName>
        <fullName>Nitrogenase component II</fullName>
    </alternativeName>
    <alternativeName>
        <fullName>Nitrogenase reductase</fullName>
    </alternativeName>
</protein>
<sequence>MSDENIRQIAFYGKGGIGKSTTSQNTIAALAEMGERIMIVGCDPKADSTRLMLHSKAQTTILHLAAERGAVEDLELEEVLLTGYRDVKCVESGGPEPGVGCAGRGIITAINFLEENGAYEDLDFVSYDVLGDVVCGGFAMPIREGKAQEIYIVTSGEMMAMYAANNIARGILKYAHSGGVRLGGLICNSRKVDREIELIETLAQRLNTQMIHFVPRDNIVQHAELRRMTVNEYAPDSAQAQEYATLARKIKDNTNLTIPTPISMDELEDLLVEFGLLGGDEEYEKAIKQDLAKRGA</sequence>
<reference key="1">
    <citation type="journal article" date="1991" name="Plant Cell Physiol.">
        <title>Cloning, nucleotide sequences and differential expression of the nifH and nifH-like (frxC) genes from the filamentous nitrogen-fixing cyanobacterium Plectonema boryanum.</title>
        <authorList>
            <person name="Fujita Y."/>
            <person name="Takahashi Y."/>
            <person name="Shonai F."/>
            <person name="Ogura Y."/>
            <person name="Matsubara H."/>
        </authorList>
    </citation>
    <scope>NUCLEOTIDE SEQUENCE [GENOMIC DNA]</scope>
    <source>
        <strain>ATCC 27894 / CCAP 1463/1 / IAM M-101 / PCC 6306 / UTEX 581</strain>
    </source>
</reference>
<reference key="2">
    <citation type="journal article" date="1994" name="Appl. Environ. Microbiol.">
        <title>Detection and characterization of cyanobacterial nifH genes.</title>
        <authorList>
            <person name="Ben-Porath J."/>
            <person name="Zehr J.P."/>
        </authorList>
    </citation>
    <scope>NUCLEOTIDE SEQUENCE [GENOMIC DNA] OF 48-155</scope>
    <source>
        <strain>ATCC 18200 / UTEX 594 / PCC 73110</strain>
    </source>
</reference>
<feature type="chain" id="PRO_0000139520" description="Nitrogenase iron protein">
    <location>
        <begin position="1"/>
        <end position="296"/>
    </location>
</feature>
<feature type="binding site" evidence="2">
    <location>
        <begin position="13"/>
        <end position="20"/>
    </location>
    <ligand>
        <name>ATP</name>
        <dbReference type="ChEBI" id="CHEBI:30616"/>
    </ligand>
</feature>
<feature type="binding site" evidence="1">
    <location>
        <position position="101"/>
    </location>
    <ligand>
        <name>[4Fe-4S] cluster</name>
        <dbReference type="ChEBI" id="CHEBI:49883"/>
        <note>ligand shared between dimeric partners</note>
    </ligand>
</feature>
<feature type="binding site" evidence="1">
    <location>
        <position position="135"/>
    </location>
    <ligand>
        <name>[4Fe-4S] cluster</name>
        <dbReference type="ChEBI" id="CHEBI:49883"/>
        <note>ligand shared between dimeric partners</note>
    </ligand>
</feature>
<feature type="modified residue" description="ADP-ribosylarginine; by dinitrogenase reductase ADP-ribosyltransferase" evidence="1">
    <location>
        <position position="104"/>
    </location>
</feature>
<keyword id="KW-0004">4Fe-4S</keyword>
<keyword id="KW-0013">ADP-ribosylation</keyword>
<keyword id="KW-0067">ATP-binding</keyword>
<keyword id="KW-0408">Iron</keyword>
<keyword id="KW-0411">Iron-sulfur</keyword>
<keyword id="KW-0479">Metal-binding</keyword>
<keyword id="KW-0535">Nitrogen fixation</keyword>
<keyword id="KW-0547">Nucleotide-binding</keyword>
<keyword id="KW-0560">Oxidoreductase</keyword>
<proteinExistence type="inferred from homology"/>
<organism>
    <name type="scientific">Leptolyngbya boryana</name>
    <name type="common">Plectonema boryanum</name>
    <dbReference type="NCBI Taxonomy" id="1184"/>
    <lineage>
        <taxon>Bacteria</taxon>
        <taxon>Bacillati</taxon>
        <taxon>Cyanobacteriota</taxon>
        <taxon>Cyanophyceae</taxon>
        <taxon>Leptolyngbyales</taxon>
        <taxon>Leptolyngbyaceae</taxon>
        <taxon>Leptolyngbya group</taxon>
        <taxon>Leptolyngbya</taxon>
    </lineage>
</organism>
<name>NIFH_LEPBY</name>
<evidence type="ECO:0000250" key="1"/>
<evidence type="ECO:0000255" key="2"/>
<evidence type="ECO:0000305" key="3"/>